<name>Y2566_YERPS</name>
<feature type="chain" id="PRO_1000046758" description="UPF0303 protein YPTB2566">
    <location>
        <begin position="1"/>
        <end position="171"/>
    </location>
</feature>
<sequence>MNLQQQLAYCQQHQQRLQLRHFDNETAWQLGEKIKRQAEKQGVALAIDITVNHQTLFSYAMAGTCAENQDWLRRKRNVVELLSTSSYAAGLMLQQRETSLDARYGVSLRDYAALGGAFPLQIKQAGIIGSVNVSGAPHLDDHNLLLQVLADFIGLPTGSIELLTPLTPLSV</sequence>
<dbReference type="EMBL" id="BX936398">
    <property type="protein sequence ID" value="CAH21804.1"/>
    <property type="molecule type" value="Genomic_DNA"/>
</dbReference>
<dbReference type="RefSeq" id="WP_011192659.1">
    <property type="nucleotide sequence ID" value="NC_006155.1"/>
</dbReference>
<dbReference type="SMR" id="Q669C1"/>
<dbReference type="GeneID" id="49785430"/>
<dbReference type="KEGG" id="ypo:BZ17_4072"/>
<dbReference type="KEGG" id="yps:YPTB2566"/>
<dbReference type="PATRIC" id="fig|273123.14.peg.4280"/>
<dbReference type="Proteomes" id="UP000001011">
    <property type="component" value="Chromosome"/>
</dbReference>
<dbReference type="FunFam" id="3.30.450.150:FF:000003">
    <property type="entry name" value="UPF0303 protein YPTS_2661"/>
    <property type="match status" value="1"/>
</dbReference>
<dbReference type="Gene3D" id="3.30.450.150">
    <property type="entry name" value="Haem-degrading domain"/>
    <property type="match status" value="1"/>
</dbReference>
<dbReference type="HAMAP" id="MF_00761">
    <property type="entry name" value="UPF0303"/>
    <property type="match status" value="1"/>
</dbReference>
<dbReference type="InterPro" id="IPR005624">
    <property type="entry name" value="PduO/GlcC-like"/>
</dbReference>
<dbReference type="InterPro" id="IPR038084">
    <property type="entry name" value="PduO/GlcC-like_sf"/>
</dbReference>
<dbReference type="InterPro" id="IPR010371">
    <property type="entry name" value="YBR137W-like"/>
</dbReference>
<dbReference type="NCBIfam" id="NF002694">
    <property type="entry name" value="PRK02487.1-3"/>
    <property type="match status" value="1"/>
</dbReference>
<dbReference type="NCBIfam" id="NF002696">
    <property type="entry name" value="PRK02487.1-5"/>
    <property type="match status" value="1"/>
</dbReference>
<dbReference type="PANTHER" id="PTHR28255">
    <property type="match status" value="1"/>
</dbReference>
<dbReference type="PANTHER" id="PTHR28255:SF1">
    <property type="entry name" value="UPF0303 PROTEIN YBR137W"/>
    <property type="match status" value="1"/>
</dbReference>
<dbReference type="Pfam" id="PF03928">
    <property type="entry name" value="HbpS-like"/>
    <property type="match status" value="1"/>
</dbReference>
<dbReference type="PIRSF" id="PIRSF008757">
    <property type="entry name" value="UCP008757"/>
    <property type="match status" value="1"/>
</dbReference>
<dbReference type="SUPFAM" id="SSF143744">
    <property type="entry name" value="GlcG-like"/>
    <property type="match status" value="1"/>
</dbReference>
<accession>Q669C1</accession>
<evidence type="ECO:0000255" key="1">
    <source>
        <dbReference type="HAMAP-Rule" id="MF_00761"/>
    </source>
</evidence>
<gene>
    <name type="ordered locus">YPTB2566</name>
</gene>
<reference key="1">
    <citation type="journal article" date="2004" name="Proc. Natl. Acad. Sci. U.S.A.">
        <title>Insights into the evolution of Yersinia pestis through whole-genome comparison with Yersinia pseudotuberculosis.</title>
        <authorList>
            <person name="Chain P.S.G."/>
            <person name="Carniel E."/>
            <person name="Larimer F.W."/>
            <person name="Lamerdin J."/>
            <person name="Stoutland P.O."/>
            <person name="Regala W.M."/>
            <person name="Georgescu A.M."/>
            <person name="Vergez L.M."/>
            <person name="Land M.L."/>
            <person name="Motin V.L."/>
            <person name="Brubaker R.R."/>
            <person name="Fowler J."/>
            <person name="Hinnebusch J."/>
            <person name="Marceau M."/>
            <person name="Medigue C."/>
            <person name="Simonet M."/>
            <person name="Chenal-Francisque V."/>
            <person name="Souza B."/>
            <person name="Dacheux D."/>
            <person name="Elliott J.M."/>
            <person name="Derbise A."/>
            <person name="Hauser L.J."/>
            <person name="Garcia E."/>
        </authorList>
    </citation>
    <scope>NUCLEOTIDE SEQUENCE [LARGE SCALE GENOMIC DNA]</scope>
    <source>
        <strain>IP32953</strain>
    </source>
</reference>
<comment type="similarity">
    <text evidence="1">Belongs to the UPF0303 family.</text>
</comment>
<organism>
    <name type="scientific">Yersinia pseudotuberculosis serotype I (strain IP32953)</name>
    <dbReference type="NCBI Taxonomy" id="273123"/>
    <lineage>
        <taxon>Bacteria</taxon>
        <taxon>Pseudomonadati</taxon>
        <taxon>Pseudomonadota</taxon>
        <taxon>Gammaproteobacteria</taxon>
        <taxon>Enterobacterales</taxon>
        <taxon>Yersiniaceae</taxon>
        <taxon>Yersinia</taxon>
    </lineage>
</organism>
<protein>
    <recommendedName>
        <fullName evidence="1">UPF0303 protein YPTB2566</fullName>
    </recommendedName>
</protein>
<proteinExistence type="inferred from homology"/>